<comment type="subcellular location">
    <subcellularLocation>
        <location evidence="3">Secreted</location>
    </subcellularLocation>
</comment>
<comment type="tissue specificity">
    <text evidence="3">Expressed by the skin glands.</text>
</comment>
<comment type="mass spectrometry">
    <text>Without hydroxylation at Pro-56.</text>
</comment>
<comment type="mass spectrometry">
    <text>With hydroxylation at Pro-56.</text>
</comment>
<comment type="similarity">
    <text evidence="1">Belongs to the frog skin active peptide (FSAP) family. Tryptophillin subfamily.</text>
</comment>
<gene>
    <name evidence="4" type="primary">trp-Pha-T1</name>
</gene>
<protein>
    <recommendedName>
        <fullName evidence="4">Tryptophyllin-T1</fullName>
        <shortName evidence="4">Pha-T1</shortName>
    </recommendedName>
    <alternativeName>
        <fullName evidence="4">Tryptophyllin-5</fullName>
    </alternativeName>
    <alternativeName>
        <fullName evidence="4">Tryptophyllin-HA5</fullName>
    </alternativeName>
</protein>
<organism>
    <name type="scientific">Pithecopus azureus</name>
    <name type="common">Orange-legged monkey tree frog</name>
    <name type="synonym">Phyllomedusa azurea</name>
    <dbReference type="NCBI Taxonomy" id="2034991"/>
    <lineage>
        <taxon>Eukaryota</taxon>
        <taxon>Metazoa</taxon>
        <taxon>Chordata</taxon>
        <taxon>Craniata</taxon>
        <taxon>Vertebrata</taxon>
        <taxon>Euteleostomi</taxon>
        <taxon>Amphibia</taxon>
        <taxon>Batrachia</taxon>
        <taxon>Anura</taxon>
        <taxon>Neobatrachia</taxon>
        <taxon>Hyloidea</taxon>
        <taxon>Hylidae</taxon>
        <taxon>Phyllomedusinae</taxon>
        <taxon>Pithecopus</taxon>
    </lineage>
</organism>
<name>TY01_PITAZ</name>
<dbReference type="EMBL" id="AM292542">
    <property type="protein sequence ID" value="CAL23475.1"/>
    <property type="molecule type" value="mRNA"/>
</dbReference>
<dbReference type="GO" id="GO:0005576">
    <property type="term" value="C:extracellular region"/>
    <property type="evidence" value="ECO:0007669"/>
    <property type="project" value="UniProtKB-SubCell"/>
</dbReference>
<dbReference type="GO" id="GO:0006952">
    <property type="term" value="P:defense response"/>
    <property type="evidence" value="ECO:0007669"/>
    <property type="project" value="UniProtKB-KW"/>
</dbReference>
<dbReference type="InterPro" id="IPR004275">
    <property type="entry name" value="Frog_antimicrobial_propeptide"/>
</dbReference>
<dbReference type="Pfam" id="PF03032">
    <property type="entry name" value="FSAP_sig_propep"/>
    <property type="match status" value="1"/>
</dbReference>
<keyword id="KW-0878">Amphibian defense peptide</keyword>
<keyword id="KW-0903">Direct protein sequencing</keyword>
<keyword id="KW-0379">Hydroxylation</keyword>
<keyword id="KW-0964">Secreted</keyword>
<keyword id="KW-0732">Signal</keyword>
<feature type="signal peptide" evidence="1">
    <location>
        <begin position="1"/>
        <end position="22"/>
    </location>
</feature>
<feature type="propeptide" id="PRO_0000250602" evidence="3">
    <location>
        <begin position="23"/>
        <end position="53"/>
    </location>
</feature>
<feature type="peptide" id="PRO_0000250603" description="Tryptophyllin-T1" evidence="3">
    <location>
        <begin position="54"/>
        <end position="61"/>
    </location>
</feature>
<feature type="region of interest" description="Disordered" evidence="2">
    <location>
        <begin position="25"/>
        <end position="61"/>
    </location>
</feature>
<feature type="compositionally biased region" description="Basic and acidic residues" evidence="2">
    <location>
        <begin position="36"/>
        <end position="55"/>
    </location>
</feature>
<feature type="modified residue" description="4-hydroxyproline; partial" evidence="3">
    <location>
        <position position="56"/>
    </location>
</feature>
<reference evidence="5 6" key="1">
    <citation type="journal article" date="2007" name="J. Proteome Res.">
        <title>Amphibian skin secretomics: application of parallel quadrupole time-of-flight mass spectrometry and peptide precursor cDNA cloning to rapidly characterize the skin secretory peptidome of Phyllomedusa hypochondrialis azurea: discovery of a novel peptide family, the hyposins.</title>
        <authorList>
            <person name="Thompson A.H."/>
            <person name="Bjourson A.J."/>
            <person name="Orr D.F."/>
            <person name="Shaw C."/>
            <person name="McClean S."/>
        </authorList>
    </citation>
    <scope>NUCLEOTIDE SEQUENCE [MRNA]</scope>
    <scope>PROTEIN SEQUENCE OF 54-61</scope>
    <scope>SUBCELLULAR LOCATION</scope>
    <scope>TISSUE SPECIFICITY</scope>
    <scope>MASS SPECTROMETRY</scope>
    <scope>HYDROXYLATION AT PRO-56</scope>
    <source>
        <tissue>Skin</tissue>
        <tissue evidence="3">Skin secretion</tissue>
    </source>
</reference>
<proteinExistence type="evidence at protein level"/>
<accession>Q0VKG8</accession>
<accession>P84945</accession>
<sequence>MDFLKKSLFLVLFLGLVSISLCDEEKRQDDDEASEREEKKEIHEEGNQEERRDRPPSWIPK</sequence>
<evidence type="ECO:0000255" key="1"/>
<evidence type="ECO:0000256" key="2">
    <source>
        <dbReference type="SAM" id="MobiDB-lite"/>
    </source>
</evidence>
<evidence type="ECO:0000269" key="3">
    <source>
    </source>
</evidence>
<evidence type="ECO:0000303" key="4">
    <source>
    </source>
</evidence>
<evidence type="ECO:0000305" key="5"/>
<evidence type="ECO:0000312" key="6">
    <source>
        <dbReference type="EMBL" id="CAL23475.1"/>
    </source>
</evidence>